<organism>
    <name type="scientific">Synechococcus sp. (strain RCC307)</name>
    <dbReference type="NCBI Taxonomy" id="316278"/>
    <lineage>
        <taxon>Bacteria</taxon>
        <taxon>Bacillati</taxon>
        <taxon>Cyanobacteriota</taxon>
        <taxon>Cyanophyceae</taxon>
        <taxon>Synechococcales</taxon>
        <taxon>Synechococcaceae</taxon>
        <taxon>Synechococcus</taxon>
    </lineage>
</organism>
<name>TRPC_SYNR3</name>
<evidence type="ECO:0000255" key="1">
    <source>
        <dbReference type="HAMAP-Rule" id="MF_00134"/>
    </source>
</evidence>
<reference key="1">
    <citation type="submission" date="2006-05" db="EMBL/GenBank/DDBJ databases">
        <authorList>
            <consortium name="Genoscope"/>
        </authorList>
    </citation>
    <scope>NUCLEOTIDE SEQUENCE [LARGE SCALE GENOMIC DNA]</scope>
    <source>
        <strain>RCC307</strain>
    </source>
</reference>
<dbReference type="EC" id="4.1.1.48" evidence="1"/>
<dbReference type="EMBL" id="CT978603">
    <property type="protein sequence ID" value="CAK27519.1"/>
    <property type="molecule type" value="Genomic_DNA"/>
</dbReference>
<dbReference type="SMR" id="A5GRL0"/>
<dbReference type="STRING" id="316278.SynRCC307_0616"/>
<dbReference type="KEGG" id="syr:SynRCC307_0616"/>
<dbReference type="eggNOG" id="COG0134">
    <property type="taxonomic scope" value="Bacteria"/>
</dbReference>
<dbReference type="HOGENOM" id="CLU_034247_1_0_3"/>
<dbReference type="OrthoDB" id="9804217at2"/>
<dbReference type="UniPathway" id="UPA00035">
    <property type="reaction ID" value="UER00043"/>
</dbReference>
<dbReference type="Proteomes" id="UP000001115">
    <property type="component" value="Chromosome"/>
</dbReference>
<dbReference type="GO" id="GO:0004425">
    <property type="term" value="F:indole-3-glycerol-phosphate synthase activity"/>
    <property type="evidence" value="ECO:0007669"/>
    <property type="project" value="UniProtKB-UniRule"/>
</dbReference>
<dbReference type="GO" id="GO:0004640">
    <property type="term" value="F:phosphoribosylanthranilate isomerase activity"/>
    <property type="evidence" value="ECO:0007669"/>
    <property type="project" value="TreeGrafter"/>
</dbReference>
<dbReference type="GO" id="GO:0000162">
    <property type="term" value="P:L-tryptophan biosynthetic process"/>
    <property type="evidence" value="ECO:0007669"/>
    <property type="project" value="UniProtKB-UniRule"/>
</dbReference>
<dbReference type="CDD" id="cd00331">
    <property type="entry name" value="IGPS"/>
    <property type="match status" value="1"/>
</dbReference>
<dbReference type="FunFam" id="3.20.20.70:FF:000024">
    <property type="entry name" value="Indole-3-glycerol phosphate synthase"/>
    <property type="match status" value="1"/>
</dbReference>
<dbReference type="Gene3D" id="3.20.20.70">
    <property type="entry name" value="Aldolase class I"/>
    <property type="match status" value="1"/>
</dbReference>
<dbReference type="HAMAP" id="MF_00134_B">
    <property type="entry name" value="IGPS_B"/>
    <property type="match status" value="1"/>
</dbReference>
<dbReference type="InterPro" id="IPR013785">
    <property type="entry name" value="Aldolase_TIM"/>
</dbReference>
<dbReference type="InterPro" id="IPR045186">
    <property type="entry name" value="Indole-3-glycerol_P_synth"/>
</dbReference>
<dbReference type="InterPro" id="IPR013798">
    <property type="entry name" value="Indole-3-glycerol_P_synth_dom"/>
</dbReference>
<dbReference type="InterPro" id="IPR001468">
    <property type="entry name" value="Indole-3-GlycerolPSynthase_CS"/>
</dbReference>
<dbReference type="InterPro" id="IPR011060">
    <property type="entry name" value="RibuloseP-bd_barrel"/>
</dbReference>
<dbReference type="NCBIfam" id="NF001372">
    <property type="entry name" value="PRK00278.1-4"/>
    <property type="match status" value="1"/>
</dbReference>
<dbReference type="NCBIfam" id="NF001377">
    <property type="entry name" value="PRK00278.2-4"/>
    <property type="match status" value="1"/>
</dbReference>
<dbReference type="PANTHER" id="PTHR22854:SF2">
    <property type="entry name" value="INDOLE-3-GLYCEROL-PHOSPHATE SYNTHASE"/>
    <property type="match status" value="1"/>
</dbReference>
<dbReference type="PANTHER" id="PTHR22854">
    <property type="entry name" value="TRYPTOPHAN BIOSYNTHESIS PROTEIN"/>
    <property type="match status" value="1"/>
</dbReference>
<dbReference type="Pfam" id="PF00218">
    <property type="entry name" value="IGPS"/>
    <property type="match status" value="1"/>
</dbReference>
<dbReference type="SUPFAM" id="SSF51366">
    <property type="entry name" value="Ribulose-phoshate binding barrel"/>
    <property type="match status" value="1"/>
</dbReference>
<dbReference type="PROSITE" id="PS00614">
    <property type="entry name" value="IGPS"/>
    <property type="match status" value="1"/>
</dbReference>
<feature type="chain" id="PRO_1000018560" description="Indole-3-glycerol phosphate synthase">
    <location>
        <begin position="1"/>
        <end position="294"/>
    </location>
</feature>
<comment type="catalytic activity">
    <reaction evidence="1">
        <text>1-(2-carboxyphenylamino)-1-deoxy-D-ribulose 5-phosphate + H(+) = (1S,2R)-1-C-(indol-3-yl)glycerol 3-phosphate + CO2 + H2O</text>
        <dbReference type="Rhea" id="RHEA:23476"/>
        <dbReference type="ChEBI" id="CHEBI:15377"/>
        <dbReference type="ChEBI" id="CHEBI:15378"/>
        <dbReference type="ChEBI" id="CHEBI:16526"/>
        <dbReference type="ChEBI" id="CHEBI:58613"/>
        <dbReference type="ChEBI" id="CHEBI:58866"/>
        <dbReference type="EC" id="4.1.1.48"/>
    </reaction>
</comment>
<comment type="pathway">
    <text evidence="1">Amino-acid biosynthesis; L-tryptophan biosynthesis; L-tryptophan from chorismate: step 4/5.</text>
</comment>
<comment type="similarity">
    <text evidence="1">Belongs to the TrpC family.</text>
</comment>
<gene>
    <name evidence="1" type="primary">trpC</name>
    <name type="ordered locus">SynRCC307_0616</name>
</gene>
<accession>A5GRL0</accession>
<sequence length="294" mass="32183">MEIRRRPPNPKVRVAHLEYAVPHDDEAPRHILEEIVWEKDREVAQARERVPLEKLKSQVAALPAPRDFVAALKASCRKPAVIAEVKKASPSKGVIREDFDPEAIAKAYAEGGASCLSVLTDKRFFQGGFEVLVQVRQVVDLPLLCKEFILSPYQLYQARAAGADAVLLIAAILTDQDISYLLKVARSLGLQVLLEVHDAAELERALGFEGVQLIGINNRDLTSFDTDLATTETLTATYGEQLRQSGALLVSESGLFSRDDLDRVQSAGADAVLVGEALMRQSDVQQALETLISG</sequence>
<keyword id="KW-0028">Amino-acid biosynthesis</keyword>
<keyword id="KW-0057">Aromatic amino acid biosynthesis</keyword>
<keyword id="KW-0210">Decarboxylase</keyword>
<keyword id="KW-0456">Lyase</keyword>
<keyword id="KW-1185">Reference proteome</keyword>
<keyword id="KW-0822">Tryptophan biosynthesis</keyword>
<proteinExistence type="inferred from homology"/>
<protein>
    <recommendedName>
        <fullName evidence="1">Indole-3-glycerol phosphate synthase</fullName>
        <shortName evidence="1">IGPS</shortName>
        <ecNumber evidence="1">4.1.1.48</ecNumber>
    </recommendedName>
</protein>